<accession>P04871</accession>
<accession>Q64813</accession>
<comment type="function">
    <text evidence="2">Major component of the virus occlusion bodies which are large proteinaceous structures termed polyhedra. These structures serve as the protective package for the virus particles outside the infected host and allow natural transmission of virus between insect hosts, assisting persistence in the environment. Forms the paracrystalline lattice of polyhedra and interacts with enveloped virions as well as other accessory molecules and structures to form a mature viral occlusion body.</text>
</comment>
<comment type="interaction">
    <interactant intactId="EBI-7644439">
        <id>P04871</id>
    </interactant>
    <interactant intactId="EBI-7644439">
        <id>P04871</id>
        <label>PH</label>
    </interactant>
    <organismsDiffer>false</organismsDiffer>
    <experiments>4</experiments>
</comment>
<comment type="subcellular location">
    <subcellularLocation>
        <location evidence="4">Host nucleus</location>
    </subcellularLocation>
</comment>
<comment type="similarity">
    <text evidence="6">Belongs to the polyhedrin family.</text>
</comment>
<feature type="chain" id="PRO_0000217243" description="Polyhedrin">
    <location>
        <begin position="1"/>
        <end position="245"/>
    </location>
</feature>
<feature type="region of interest" description="Nuclear localization signal" evidence="4">
    <location>
        <begin position="32"/>
        <end position="35"/>
    </location>
</feature>
<feature type="mutagenesis site" description="Forms a single large polyhedron." evidence="1">
    <original>G</original>
    <variation>D</variation>
    <location>
        <position position="25"/>
    </location>
</feature>
<feature type="mutagenesis site" description="Prevents crystallization of occlusion bodies." evidence="5">
    <original>L</original>
    <variation>F</variation>
    <location>
        <position position="85"/>
    </location>
</feature>
<feature type="mutagenesis site" description="Forms few or no polyhedra and accumulates with a dispersed granular protein mass." evidence="3">
    <original>V</original>
    <variation>F</variation>
    <location>
        <position position="118"/>
    </location>
</feature>
<feature type="mutagenesis site" description="Prevents the occlusion of virus particles." evidence="2">
    <original>L</original>
    <variation>F</variation>
    <location>
        <position position="183"/>
    </location>
</feature>
<feature type="strand" evidence="7">
    <location>
        <begin position="13"/>
        <end position="16"/>
    </location>
</feature>
<feature type="strand" evidence="7">
    <location>
        <begin position="19"/>
        <end position="23"/>
    </location>
</feature>
<feature type="helix" evidence="7">
    <location>
        <begin position="24"/>
        <end position="28"/>
    </location>
</feature>
<feature type="helix" evidence="7">
    <location>
        <begin position="50"/>
        <end position="52"/>
    </location>
</feature>
<feature type="strand" evidence="7">
    <location>
        <begin position="54"/>
        <end position="56"/>
    </location>
</feature>
<feature type="turn" evidence="7">
    <location>
        <begin position="59"/>
        <end position="61"/>
    </location>
</feature>
<feature type="strand" evidence="7">
    <location>
        <begin position="62"/>
        <end position="78"/>
    </location>
</feature>
<feature type="strand" evidence="7">
    <location>
        <begin position="82"/>
        <end position="85"/>
    </location>
</feature>
<feature type="helix" evidence="7">
    <location>
        <begin position="91"/>
        <end position="106"/>
    </location>
</feature>
<feature type="strand" evidence="7">
    <location>
        <begin position="111"/>
        <end position="130"/>
    </location>
</feature>
<feature type="strand" evidence="7">
    <location>
        <begin position="135"/>
        <end position="143"/>
    </location>
</feature>
<feature type="strand" evidence="7">
    <location>
        <begin position="151"/>
        <end position="154"/>
    </location>
</feature>
<feature type="strand" evidence="7">
    <location>
        <begin position="166"/>
        <end position="170"/>
    </location>
</feature>
<feature type="helix" evidence="7">
    <location>
        <begin position="191"/>
        <end position="196"/>
    </location>
</feature>
<feature type="helix" evidence="7">
    <location>
        <begin position="199"/>
        <end position="202"/>
    </location>
</feature>
<feature type="strand" evidence="7">
    <location>
        <begin position="205"/>
        <end position="213"/>
    </location>
</feature>
<feature type="strand" evidence="7">
    <location>
        <begin position="218"/>
        <end position="233"/>
    </location>
</feature>
<sequence length="245" mass="28642">MPDYSYRPTIGRTYVYDNKYYKNLGAVIKNAKRKKHFAEHEIEEATLDPLDNYLVAEDPFLGPGKNQKLTLFKEIRNVKPDTMKLVVGWKGKEFYRETWTRFMEDSFPIVNDQEVMDVFLVVNMRPTRPNRCYKFLAQHALRCDPDYVPHDVIRIVEPSWVGSNNEYRISLAKKGGGCPIMNLHSEYTNSFEQFIDRVIWENFYKPIVYIGTDSAEEEEILLEVSLVFKVKEFAPDAPLFTGPAY</sequence>
<protein>
    <recommendedName>
        <fullName>Polyhedrin</fullName>
    </recommendedName>
    <alternativeName>
        <fullName>Major occlusion protein</fullName>
    </alternativeName>
</protein>
<proteinExistence type="evidence at protein level"/>
<dbReference type="EMBL" id="K01149">
    <property type="protein sequence ID" value="AAA46719.1"/>
    <property type="molecule type" value="Genomic_DNA"/>
</dbReference>
<dbReference type="EMBL" id="M75679">
    <property type="protein sequence ID" value="AAA46704.1"/>
    <property type="molecule type" value="Genomic_DNA"/>
</dbReference>
<dbReference type="EMBL" id="K02700">
    <property type="protein sequence ID" value="AAA46722.1"/>
    <property type="molecule type" value="Genomic_DNA"/>
</dbReference>
<dbReference type="EMBL" id="M21887">
    <property type="protein sequence ID" value="AAA46720.1"/>
    <property type="molecule type" value="Genomic_DNA"/>
</dbReference>
<dbReference type="EMBL" id="M24120">
    <property type="protein sequence ID" value="AAA46721.1"/>
    <property type="molecule type" value="Genomic_DNA"/>
</dbReference>
<dbReference type="EMBL" id="D00700">
    <property type="protein sequence ID" value="BAA00607.1"/>
    <property type="molecule type" value="Genomic_DNA"/>
</dbReference>
<dbReference type="EMBL" id="L22858">
    <property type="protein sequence ID" value="AAA66638.1"/>
    <property type="molecule type" value="Genomic_DNA"/>
</dbReference>
<dbReference type="PIR" id="A03803">
    <property type="entry name" value="PYNVA2"/>
</dbReference>
<dbReference type="PDB" id="2WUX">
    <property type="method" value="X-ray"/>
    <property type="resolution" value="1.84 A"/>
    <property type="chains" value="A=1-245"/>
</dbReference>
<dbReference type="PDB" id="2WUY">
    <property type="method" value="X-ray"/>
    <property type="resolution" value="3.09 A"/>
    <property type="chains" value="A=1-245"/>
</dbReference>
<dbReference type="PDB" id="3JW6">
    <property type="method" value="X-ray"/>
    <property type="resolution" value="2.30 A"/>
    <property type="chains" value="A=1-245"/>
</dbReference>
<dbReference type="PDBsum" id="2WUX"/>
<dbReference type="PDBsum" id="2WUY"/>
<dbReference type="PDBsum" id="3JW6"/>
<dbReference type="SMR" id="P04871"/>
<dbReference type="DIP" id="DIP-49027N"/>
<dbReference type="MINT" id="P04871"/>
<dbReference type="KEGG" id="vg:1403840"/>
<dbReference type="OrthoDB" id="6325at10239"/>
<dbReference type="EvolutionaryTrace" id="P04871"/>
<dbReference type="Proteomes" id="UP000008292">
    <property type="component" value="Segment"/>
</dbReference>
<dbReference type="GO" id="GO:0044204">
    <property type="term" value="C:host cell nuclear matrix"/>
    <property type="evidence" value="ECO:0000314"/>
    <property type="project" value="UniProtKB"/>
</dbReference>
<dbReference type="GO" id="GO:0039679">
    <property type="term" value="C:viral occlusion body"/>
    <property type="evidence" value="ECO:0007669"/>
    <property type="project" value="UniProtKB-KW"/>
</dbReference>
<dbReference type="GO" id="GO:0042802">
    <property type="term" value="F:identical protein binding"/>
    <property type="evidence" value="ECO:0000353"/>
    <property type="project" value="IntAct"/>
</dbReference>
<dbReference type="GO" id="GO:0005198">
    <property type="term" value="F:structural molecule activity"/>
    <property type="evidence" value="ECO:0007669"/>
    <property type="project" value="InterPro"/>
</dbReference>
<dbReference type="InterPro" id="IPR001746">
    <property type="entry name" value="Polyhedrin"/>
</dbReference>
<dbReference type="Pfam" id="PF00738">
    <property type="entry name" value="Polyhedrin"/>
    <property type="match status" value="1"/>
</dbReference>
<gene>
    <name type="primary">PH</name>
    <name type="synonym">P29</name>
    <name type="synonym">POLH</name>
</gene>
<organismHost>
    <name type="scientific">Lepidoptera</name>
    <name type="common">butterflies and moths</name>
    <dbReference type="NCBI Taxonomy" id="7088"/>
</organismHost>
<evidence type="ECO:0000269" key="1">
    <source>
    </source>
</evidence>
<evidence type="ECO:0000269" key="2">
    <source>
    </source>
</evidence>
<evidence type="ECO:0000269" key="3">
    <source>
    </source>
</evidence>
<evidence type="ECO:0000269" key="4">
    <source>
    </source>
</evidence>
<evidence type="ECO:0000269" key="5">
    <source>
    </source>
</evidence>
<evidence type="ECO:0000305" key="6"/>
<evidence type="ECO:0007829" key="7">
    <source>
        <dbReference type="PDB" id="2WUX"/>
    </source>
</evidence>
<keyword id="KW-0002">3D-structure</keyword>
<keyword id="KW-1048">Host nucleus</keyword>
<keyword id="KW-1185">Reference proteome</keyword>
<keyword id="KW-0842">Viral occlusion body</keyword>
<organism>
    <name type="scientific">Autographa californica nuclear polyhedrosis virus</name>
    <name type="common">AcMNPV</name>
    <dbReference type="NCBI Taxonomy" id="46015"/>
    <lineage>
        <taxon>Viruses</taxon>
        <taxon>Viruses incertae sedis</taxon>
        <taxon>Naldaviricetes</taxon>
        <taxon>Lefavirales</taxon>
        <taxon>Baculoviridae</taxon>
        <taxon>Alphabaculovirus</taxon>
        <taxon>Alphabaculovirus aucalifornicae</taxon>
    </lineage>
</organism>
<reference key="1">
    <citation type="journal article" date="1983" name="Virology">
        <title>Nucleotide sequence of the polyhedrin gene of Autographa californica nuclear polyhedrosis virus.</title>
        <authorList>
            <person name="Hooft van Iddekinge B.J.L."/>
            <person name="Smith G.E."/>
            <person name="Summers M.D."/>
        </authorList>
    </citation>
    <scope>NUCLEOTIDE SEQUENCE [GENOMIC DNA]</scope>
    <source>
        <strain>E2</strain>
    </source>
</reference>
<reference key="2">
    <citation type="journal article" date="1991" name="Virology">
        <title>Nucleotide sequence of the Autographa californica nuclear polyhedrosis 9.4 kbp EcoRI-I and -R (polyhedrin gene) region.</title>
        <authorList>
            <person name="Possee R.D."/>
            <person name="Sun T.P."/>
            <person name="Howard S.C."/>
            <person name="Ayres M.D."/>
            <person name="Hill-Perkins M."/>
            <person name="Gearing K.L."/>
        </authorList>
    </citation>
    <scope>NUCLEOTIDE SEQUENCE [GENOMIC DNA]</scope>
    <source>
        <strain>C6</strain>
    </source>
</reference>
<reference key="3">
    <citation type="journal article" date="1994" name="Virology">
        <title>The complete DNA sequence of Autographa californica nuclear polyhedrosis virus.</title>
        <authorList>
            <person name="Ayres M.D."/>
            <person name="Howard S.C."/>
            <person name="Kuzio J."/>
            <person name="Lopez-Ferber M."/>
            <person name="Possee R.D."/>
        </authorList>
    </citation>
    <scope>NUCLEOTIDE SEQUENCE [LARGE SCALE GENOMIC DNA]</scope>
    <source>
        <strain>C6</strain>
    </source>
</reference>
<reference key="4">
    <citation type="journal article" date="1984" name="Mol. Cell. Biol.">
        <title>Strong and regulated expression of Escherichia coli beta-galactosidase in insect cells with a baculovirus vector.</title>
        <authorList>
            <person name="Pennock G.D."/>
            <person name="Shoemaker C."/>
            <person name="Miller L.K."/>
        </authorList>
    </citation>
    <scope>NUCLEOTIDE SEQUENCE [GENOMIC DNA] OF 1-85</scope>
    <source>
        <strain>L1</strain>
    </source>
</reference>
<reference key="5">
    <citation type="journal article" date="1986" name="Virus Res.">
        <title>Mapping the 5' and 3' ends of Autographa californica nuclear polyhedrosis virus polyhedrin mRNA.</title>
        <authorList>
            <person name="Howard S.C."/>
            <person name="Ayres M.D."/>
            <person name="Possee R.D."/>
        </authorList>
    </citation>
    <scope>NUCLEOTIDE SEQUENCE [GENOMIC DNA] OF 1-18 AND 209-245</scope>
</reference>
<reference key="6">
    <citation type="journal article" date="1990" name="J. Gen. Virol.">
        <title>Functional analysis of a 603 nucleotide open reading frame upstream of the polyhedrin gene of Autographa californica nuclear polyhedrosis virus.</title>
        <authorList>
            <person name="Gearing K.L."/>
            <person name="Possee R.D."/>
        </authorList>
    </citation>
    <scope>NUCLEOTIDE SEQUENCE [GENOMIC DNA] OF 1-72</scope>
    <source>
        <strain>C6</strain>
    </source>
</reference>
<reference key="7">
    <citation type="journal article" date="1987" name="J. Gen. Virol.">
        <title>A point mutation in the polyhedrin gene of a baculovirus, Autographa californica MNPV, prevents crystallization of occlusion bodies.</title>
        <authorList>
            <person name="Carstens E.B."/>
            <person name="Ye L.B."/>
            <person name="Faulkner P."/>
        </authorList>
    </citation>
    <scope>MUTAGENESIS OF LEU-85</scope>
</reference>
<reference key="8">
    <citation type="journal article" date="1991" name="Virology">
        <title>Requirements for nuclear localization and supramolecular assembly of a baculovirus polyhedrin protein.</title>
        <authorList>
            <person name="Jarvis D.L."/>
            <person name="Bohlmeyer D.A."/>
            <person name="Garcia A. Jr."/>
        </authorList>
    </citation>
    <scope>SUBCELLULAR LOCATION</scope>
    <scope>NUCLEAR LOCALIZATION SIGNAL</scope>
</reference>
<reference key="9">
    <citation type="journal article" date="1992" name="J. Gen. Virol.">
        <title>Analysis of polyhedra morphology mutants of Autographa californica nuclear polyhedrosis virus: molecular and ultrastructural features.</title>
        <authorList>
            <person name="Carstens E.B."/>
            <person name="Williams G.V."/>
            <person name="Faulkner P."/>
            <person name="Partington S."/>
        </authorList>
    </citation>
    <scope>FUNCTION</scope>
    <scope>MUTAGENESIS OF LEU-183</scope>
</reference>
<reference key="10">
    <citation type="journal article" date="2000" name="J. Invertebr. Pathol.">
        <title>Abnormal formation of polyhedra resulting from a single mutation in the polyhedrin gene of Autographa californica multicapsid nucleopolyhedrovirus.</title>
        <authorList>
            <person name="Lin G.Y."/>
            <person name="Zhong J."/>
            <person name="Wang X.Z."/>
        </authorList>
    </citation>
    <scope>FUNCTION</scope>
    <scope>MUTAGENESIS OF GLY-25</scope>
</reference>
<reference key="11">
    <citation type="journal article" date="2009" name="Virus Res.">
        <title>Characterization of a new Autographa californica multiple nucleopolyhedrovirus (AcMNPV) polyhedra mutant.</title>
        <authorList>
            <person name="Ribeiro B.M."/>
            <person name="Generino A.P."/>
            <person name="Acacio C.N."/>
            <person name="Kalapothakis E."/>
            <person name="Bao S.N."/>
        </authorList>
    </citation>
    <scope>MUTAGENESIS OF VAL-118</scope>
</reference>
<reference key="12">
    <citation type="journal article" date="2010" name="EMBO J.">
        <title>How baculovirus polyhedra fit square pegs into round holes to robustly package viruses.</title>
        <authorList>
            <person name="Ji X."/>
            <person name="Sutton G."/>
            <person name="Evans G."/>
            <person name="Axford D."/>
            <person name="Owen R."/>
            <person name="Stuart D.I."/>
        </authorList>
    </citation>
    <scope>X-RAY CRYSTALLOGRAPHY (1.84 ANGSTROMS)</scope>
</reference>
<reference key="13">
    <citation type="journal article" date="2009" name="Proc. Natl. Acad. Sci. U.S.A.">
        <title>The atomic structure of baculovirus polyhedra reveals the independent emergence of infectious crystals in DNA and RNA viruses.</title>
        <authorList>
            <person name="Coulibaly F."/>
            <person name="Chiu E."/>
            <person name="Gutmann S."/>
            <person name="Rajendran C."/>
            <person name="Haebel P.W."/>
            <person name="Ikeda K."/>
            <person name="Mori H."/>
            <person name="Ward V.K."/>
            <person name="Schulze-Briese C."/>
            <person name="Metcalf P."/>
        </authorList>
    </citation>
    <scope>X-RAY CRYSTALLOGRAPHY (2.30 ANGSTROMS)</scope>
</reference>
<name>PYHD_NPVAC</name>